<keyword id="KW-0067">ATP-binding</keyword>
<keyword id="KW-1003">Cell membrane</keyword>
<keyword id="KW-0963">Cytoplasm</keyword>
<keyword id="KW-0472">Membrane</keyword>
<keyword id="KW-0547">Nucleotide-binding</keyword>
<keyword id="KW-0653">Protein transport</keyword>
<keyword id="KW-1185">Reference proteome</keyword>
<keyword id="KW-1278">Translocase</keyword>
<keyword id="KW-0811">Translocation</keyword>
<keyword id="KW-0813">Transport</keyword>
<name>SECA1_CORDI</name>
<sequence length="853" mass="96093">MFGLSKMLRVGEGRAVKRLKKIADDVIALEADYTDLTDEELKAKTHEFQERIAQGESVDDLLLEAFAVAREASWRVLGQKHYPVQIMGGAALHFGNVAEMRTGEGKTLTCVLPAYLNALEGKGVHVVTVNDYLAKRDAEWMGRVHRWLGLNVGVILANMQPAERREAYNADITYGTNNELGFDYLRDNMVRSLDELVQRGHHYAIVDEVDSILIDEARTPLIISGPVDGSSQWYSVFAQIVPRMTRDIHYEVDNRKRTVGVREEGVAFVEDQLGIDNLYAPEHSQLVSYLNNAIKAKELFNRDKDYIVRNGEVLIVDDFTGRVLDGRRYNEGMHQAIEAKENVEIKNENQTLATITLQNYFRLYDKLSGMTGTAETEASELHQIYKLDVIPIPTNRPNQREDMTDLVYKTQEAKFAAVVDDISERVTKGQPVLVGTTSVERSEYLSQLLQRRGIKHSVLNAKFHEQEAQIVAKAGLPGAVTVATNMAGRGTDIVLGGNADIIADINLRERGLNPVDTPEEYEAAWDAELARVKEKGAELAEKVREAGGLYVLGTERHESRRIDNQLRGRAGRQGDPGTTRFYLSMRDDLMVRFVGQTMENMMNRLNVPDDVPIEAKMVTNSIKSAQTSVENQNFEMRKNVLKYDEVMNEQRKVIYTERREILESADIAADIQKMIDDTIGAYVDAATATGYVEDWDLETLWNALESLYGPSFSAQELIDGDSYGESGELSASDLRKAVLEDAHKQYAELEENVTAIGGEAQMRNIERMVILPVIDTKWREHLYEMDYLKEGIGLRAMAQRDPLVEYQKEGGDMFNAMKDAVKEETVRQLFLLRKQFAVANEQPAETEEGTVEA</sequence>
<reference key="1">
    <citation type="journal article" date="2003" name="Nucleic Acids Res.">
        <title>The complete genome sequence and analysis of Corynebacterium diphtheriae NCTC13129.</title>
        <authorList>
            <person name="Cerdeno-Tarraga A.-M."/>
            <person name="Efstratiou A."/>
            <person name="Dover L.G."/>
            <person name="Holden M.T.G."/>
            <person name="Pallen M.J."/>
            <person name="Bentley S.D."/>
            <person name="Besra G.S."/>
            <person name="Churcher C.M."/>
            <person name="James K.D."/>
            <person name="De Zoysa A."/>
            <person name="Chillingworth T."/>
            <person name="Cronin A."/>
            <person name="Dowd L."/>
            <person name="Feltwell T."/>
            <person name="Hamlin N."/>
            <person name="Holroyd S."/>
            <person name="Jagels K."/>
            <person name="Moule S."/>
            <person name="Quail M.A."/>
            <person name="Rabbinowitsch E."/>
            <person name="Rutherford K.M."/>
            <person name="Thomson N.R."/>
            <person name="Unwin L."/>
            <person name="Whitehead S."/>
            <person name="Barrell B.G."/>
            <person name="Parkhill J."/>
        </authorList>
    </citation>
    <scope>NUCLEOTIDE SEQUENCE [LARGE SCALE GENOMIC DNA]</scope>
    <source>
        <strain>ATCC 700971 / NCTC 13129 / Biotype gravis</strain>
    </source>
</reference>
<protein>
    <recommendedName>
        <fullName evidence="1">Protein translocase subunit SecA 1</fullName>
        <ecNumber evidence="1">7.4.2.8</ecNumber>
    </recommendedName>
</protein>
<accession>Q6NIR8</accession>
<organism>
    <name type="scientific">Corynebacterium diphtheriae (strain ATCC 700971 / NCTC 13129 / Biotype gravis)</name>
    <dbReference type="NCBI Taxonomy" id="257309"/>
    <lineage>
        <taxon>Bacteria</taxon>
        <taxon>Bacillati</taxon>
        <taxon>Actinomycetota</taxon>
        <taxon>Actinomycetes</taxon>
        <taxon>Mycobacteriales</taxon>
        <taxon>Corynebacteriaceae</taxon>
        <taxon>Corynebacterium</taxon>
    </lineage>
</organism>
<dbReference type="EC" id="7.4.2.8" evidence="1"/>
<dbReference type="EMBL" id="BX248355">
    <property type="protein sequence ID" value="CAE49216.1"/>
    <property type="molecule type" value="Genomic_DNA"/>
</dbReference>
<dbReference type="SMR" id="Q6NIR8"/>
<dbReference type="STRING" id="257309.DIP0699"/>
<dbReference type="KEGG" id="cdi:DIP0699"/>
<dbReference type="HOGENOM" id="CLU_005314_3_2_11"/>
<dbReference type="Proteomes" id="UP000002198">
    <property type="component" value="Chromosome"/>
</dbReference>
<dbReference type="GO" id="GO:0031522">
    <property type="term" value="C:cell envelope Sec protein transport complex"/>
    <property type="evidence" value="ECO:0007669"/>
    <property type="project" value="TreeGrafter"/>
</dbReference>
<dbReference type="GO" id="GO:0005829">
    <property type="term" value="C:cytosol"/>
    <property type="evidence" value="ECO:0007669"/>
    <property type="project" value="TreeGrafter"/>
</dbReference>
<dbReference type="GO" id="GO:0005886">
    <property type="term" value="C:plasma membrane"/>
    <property type="evidence" value="ECO:0007669"/>
    <property type="project" value="UniProtKB-SubCell"/>
</dbReference>
<dbReference type="GO" id="GO:0005524">
    <property type="term" value="F:ATP binding"/>
    <property type="evidence" value="ECO:0007669"/>
    <property type="project" value="UniProtKB-UniRule"/>
</dbReference>
<dbReference type="GO" id="GO:0008564">
    <property type="term" value="F:protein-exporting ATPase activity"/>
    <property type="evidence" value="ECO:0007669"/>
    <property type="project" value="UniProtKB-EC"/>
</dbReference>
<dbReference type="GO" id="GO:0065002">
    <property type="term" value="P:intracellular protein transmembrane transport"/>
    <property type="evidence" value="ECO:0007669"/>
    <property type="project" value="UniProtKB-UniRule"/>
</dbReference>
<dbReference type="GO" id="GO:0017038">
    <property type="term" value="P:protein import"/>
    <property type="evidence" value="ECO:0007669"/>
    <property type="project" value="InterPro"/>
</dbReference>
<dbReference type="GO" id="GO:0006605">
    <property type="term" value="P:protein targeting"/>
    <property type="evidence" value="ECO:0007669"/>
    <property type="project" value="UniProtKB-UniRule"/>
</dbReference>
<dbReference type="GO" id="GO:0043952">
    <property type="term" value="P:protein transport by the Sec complex"/>
    <property type="evidence" value="ECO:0007669"/>
    <property type="project" value="TreeGrafter"/>
</dbReference>
<dbReference type="CDD" id="cd17928">
    <property type="entry name" value="DEXDc_SecA"/>
    <property type="match status" value="1"/>
</dbReference>
<dbReference type="CDD" id="cd18803">
    <property type="entry name" value="SF2_C_secA"/>
    <property type="match status" value="1"/>
</dbReference>
<dbReference type="FunFam" id="1.10.3060.10:FF:000002">
    <property type="entry name" value="Preprotein translocase subunit SecA"/>
    <property type="match status" value="1"/>
</dbReference>
<dbReference type="FunFam" id="3.40.50.300:FF:000113">
    <property type="entry name" value="Preprotein translocase subunit SecA"/>
    <property type="match status" value="1"/>
</dbReference>
<dbReference type="FunFam" id="3.40.50.300:FF:000246">
    <property type="entry name" value="Preprotein translocase subunit SecA"/>
    <property type="match status" value="1"/>
</dbReference>
<dbReference type="FunFam" id="3.40.50.300:FF:000334">
    <property type="entry name" value="Protein translocase subunit SecA"/>
    <property type="match status" value="1"/>
</dbReference>
<dbReference type="FunFam" id="3.90.1440.10:FF:000002">
    <property type="entry name" value="Protein translocase subunit SecA"/>
    <property type="match status" value="1"/>
</dbReference>
<dbReference type="Gene3D" id="1.10.3060.10">
    <property type="entry name" value="Helical scaffold and wing domains of SecA"/>
    <property type="match status" value="1"/>
</dbReference>
<dbReference type="Gene3D" id="3.40.50.300">
    <property type="entry name" value="P-loop containing nucleotide triphosphate hydrolases"/>
    <property type="match status" value="2"/>
</dbReference>
<dbReference type="Gene3D" id="3.90.1440.10">
    <property type="entry name" value="SecA, preprotein cross-linking domain"/>
    <property type="match status" value="1"/>
</dbReference>
<dbReference type="HAMAP" id="MF_01382">
    <property type="entry name" value="SecA"/>
    <property type="match status" value="1"/>
</dbReference>
<dbReference type="InterPro" id="IPR014001">
    <property type="entry name" value="Helicase_ATP-bd"/>
</dbReference>
<dbReference type="InterPro" id="IPR001650">
    <property type="entry name" value="Helicase_C-like"/>
</dbReference>
<dbReference type="InterPro" id="IPR027417">
    <property type="entry name" value="P-loop_NTPase"/>
</dbReference>
<dbReference type="InterPro" id="IPR000185">
    <property type="entry name" value="SecA"/>
</dbReference>
<dbReference type="InterPro" id="IPR020937">
    <property type="entry name" value="SecA_CS"/>
</dbReference>
<dbReference type="InterPro" id="IPR011115">
    <property type="entry name" value="SecA_DEAD"/>
</dbReference>
<dbReference type="InterPro" id="IPR014018">
    <property type="entry name" value="SecA_motor_DEAD"/>
</dbReference>
<dbReference type="InterPro" id="IPR011130">
    <property type="entry name" value="SecA_preprotein_X-link_dom"/>
</dbReference>
<dbReference type="InterPro" id="IPR044722">
    <property type="entry name" value="SecA_SF2_C"/>
</dbReference>
<dbReference type="InterPro" id="IPR011116">
    <property type="entry name" value="SecA_Wing/Scaffold"/>
</dbReference>
<dbReference type="InterPro" id="IPR036266">
    <property type="entry name" value="SecA_Wing/Scaffold_sf"/>
</dbReference>
<dbReference type="InterPro" id="IPR036670">
    <property type="entry name" value="SecA_X-link_sf"/>
</dbReference>
<dbReference type="NCBIfam" id="NF009538">
    <property type="entry name" value="PRK12904.1"/>
    <property type="match status" value="1"/>
</dbReference>
<dbReference type="NCBIfam" id="TIGR00963">
    <property type="entry name" value="secA"/>
    <property type="match status" value="1"/>
</dbReference>
<dbReference type="PANTHER" id="PTHR30612:SF0">
    <property type="entry name" value="CHLOROPLAST PROTEIN-TRANSPORTING ATPASE"/>
    <property type="match status" value="1"/>
</dbReference>
<dbReference type="PANTHER" id="PTHR30612">
    <property type="entry name" value="SECA INNER MEMBRANE COMPONENT OF SEC PROTEIN SECRETION SYSTEM"/>
    <property type="match status" value="1"/>
</dbReference>
<dbReference type="Pfam" id="PF21090">
    <property type="entry name" value="P-loop_SecA"/>
    <property type="match status" value="1"/>
</dbReference>
<dbReference type="Pfam" id="PF07517">
    <property type="entry name" value="SecA_DEAD"/>
    <property type="match status" value="1"/>
</dbReference>
<dbReference type="Pfam" id="PF01043">
    <property type="entry name" value="SecA_PP_bind"/>
    <property type="match status" value="1"/>
</dbReference>
<dbReference type="Pfam" id="PF07516">
    <property type="entry name" value="SecA_SW"/>
    <property type="match status" value="1"/>
</dbReference>
<dbReference type="PRINTS" id="PR00906">
    <property type="entry name" value="SECA"/>
</dbReference>
<dbReference type="SMART" id="SM00957">
    <property type="entry name" value="SecA_DEAD"/>
    <property type="match status" value="1"/>
</dbReference>
<dbReference type="SMART" id="SM00958">
    <property type="entry name" value="SecA_PP_bind"/>
    <property type="match status" value="1"/>
</dbReference>
<dbReference type="SUPFAM" id="SSF81886">
    <property type="entry name" value="Helical scaffold and wing domains of SecA"/>
    <property type="match status" value="1"/>
</dbReference>
<dbReference type="SUPFAM" id="SSF52540">
    <property type="entry name" value="P-loop containing nucleoside triphosphate hydrolases"/>
    <property type="match status" value="2"/>
</dbReference>
<dbReference type="SUPFAM" id="SSF81767">
    <property type="entry name" value="Pre-protein crosslinking domain of SecA"/>
    <property type="match status" value="1"/>
</dbReference>
<dbReference type="PROSITE" id="PS01312">
    <property type="entry name" value="SECA"/>
    <property type="match status" value="1"/>
</dbReference>
<dbReference type="PROSITE" id="PS51196">
    <property type="entry name" value="SECA_MOTOR_DEAD"/>
    <property type="match status" value="1"/>
</dbReference>
<gene>
    <name evidence="1" type="primary">secA1</name>
    <name type="ordered locus">DIP0699</name>
</gene>
<proteinExistence type="inferred from homology"/>
<comment type="function">
    <text evidence="1">Part of the Sec protein translocase complex. Interacts with the SecYEG preprotein conducting channel. Has a central role in coupling the hydrolysis of ATP to the transfer of proteins into and across the cell membrane, serving as an ATP-driven molecular motor driving the stepwise translocation of polypeptide chains across the membrane.</text>
</comment>
<comment type="catalytic activity">
    <reaction evidence="1">
        <text>ATP + H2O + cellular proteinSide 1 = ADP + phosphate + cellular proteinSide 2.</text>
        <dbReference type="EC" id="7.4.2.8"/>
    </reaction>
</comment>
<comment type="subunit">
    <text evidence="1">Monomer and homodimer. Part of the essential Sec protein translocation apparatus which comprises SecA, SecYEG and auxiliary proteins SecDF. Other proteins may also be involved.</text>
</comment>
<comment type="subcellular location">
    <subcellularLocation>
        <location evidence="1">Cell membrane</location>
        <topology evidence="1">Peripheral membrane protein</topology>
        <orientation evidence="1">Cytoplasmic side</orientation>
    </subcellularLocation>
    <subcellularLocation>
        <location evidence="1">Cytoplasm</location>
    </subcellularLocation>
    <text evidence="1">Distribution is 50-50.</text>
</comment>
<comment type="similarity">
    <text evidence="1">Belongs to the SecA family.</text>
</comment>
<feature type="chain" id="PRO_0000318337" description="Protein translocase subunit SecA 1">
    <location>
        <begin position="1"/>
        <end position="853"/>
    </location>
</feature>
<feature type="binding site" evidence="1">
    <location>
        <position position="85"/>
    </location>
    <ligand>
        <name>ATP</name>
        <dbReference type="ChEBI" id="CHEBI:30616"/>
    </ligand>
</feature>
<feature type="binding site" evidence="1">
    <location>
        <begin position="103"/>
        <end position="107"/>
    </location>
    <ligand>
        <name>ATP</name>
        <dbReference type="ChEBI" id="CHEBI:30616"/>
    </ligand>
</feature>
<feature type="binding site" evidence="1">
    <location>
        <position position="492"/>
    </location>
    <ligand>
        <name>ATP</name>
        <dbReference type="ChEBI" id="CHEBI:30616"/>
    </ligand>
</feature>
<evidence type="ECO:0000255" key="1">
    <source>
        <dbReference type="HAMAP-Rule" id="MF_01382"/>
    </source>
</evidence>